<dbReference type="EMBL" id="CP000822">
    <property type="protein sequence ID" value="ABV11741.1"/>
    <property type="molecule type" value="Genomic_DNA"/>
</dbReference>
<dbReference type="RefSeq" id="WP_012131565.1">
    <property type="nucleotide sequence ID" value="NC_009792.1"/>
</dbReference>
<dbReference type="SMR" id="A8AE28"/>
<dbReference type="STRING" id="290338.CKO_00587"/>
<dbReference type="GeneID" id="45134821"/>
<dbReference type="KEGG" id="cko:CKO_00587"/>
<dbReference type="HOGENOM" id="CLU_175457_0_0_6"/>
<dbReference type="OrthoDB" id="5771474at2"/>
<dbReference type="Proteomes" id="UP000008148">
    <property type="component" value="Chromosome"/>
</dbReference>
<dbReference type="FunFam" id="1.10.3390.10:FF:000001">
    <property type="entry name" value="UPF0352 protein YejL"/>
    <property type="match status" value="1"/>
</dbReference>
<dbReference type="Gene3D" id="1.10.3390.10">
    <property type="entry name" value="YejL-like"/>
    <property type="match status" value="1"/>
</dbReference>
<dbReference type="HAMAP" id="MF_00816">
    <property type="entry name" value="UPF0352"/>
    <property type="match status" value="1"/>
</dbReference>
<dbReference type="InterPro" id="IPR009857">
    <property type="entry name" value="UPF0352"/>
</dbReference>
<dbReference type="InterPro" id="IPR023202">
    <property type="entry name" value="YejL_sf"/>
</dbReference>
<dbReference type="NCBIfam" id="NF010242">
    <property type="entry name" value="PRK13689.1"/>
    <property type="match status" value="1"/>
</dbReference>
<dbReference type="Pfam" id="PF07208">
    <property type="entry name" value="DUF1414"/>
    <property type="match status" value="1"/>
</dbReference>
<dbReference type="PIRSF" id="PIRSF006188">
    <property type="entry name" value="UCP006188"/>
    <property type="match status" value="1"/>
</dbReference>
<dbReference type="SUPFAM" id="SSF158651">
    <property type="entry name" value="YejL-like"/>
    <property type="match status" value="1"/>
</dbReference>
<gene>
    <name type="ordered locus">CKO_00587</name>
</gene>
<feature type="chain" id="PRO_1000062299" description="UPF0352 protein CKO_00587">
    <location>
        <begin position="1"/>
        <end position="75"/>
    </location>
</feature>
<accession>A8AE28</accession>
<protein>
    <recommendedName>
        <fullName evidence="1">UPF0352 protein CKO_00587</fullName>
    </recommendedName>
</protein>
<organism>
    <name type="scientific">Citrobacter koseri (strain ATCC BAA-895 / CDC 4225-83 / SGSC4696)</name>
    <dbReference type="NCBI Taxonomy" id="290338"/>
    <lineage>
        <taxon>Bacteria</taxon>
        <taxon>Pseudomonadati</taxon>
        <taxon>Pseudomonadota</taxon>
        <taxon>Gammaproteobacteria</taxon>
        <taxon>Enterobacterales</taxon>
        <taxon>Enterobacteriaceae</taxon>
        <taxon>Citrobacter</taxon>
    </lineage>
</organism>
<comment type="similarity">
    <text evidence="1">Belongs to the UPF0352 family.</text>
</comment>
<sequence length="75" mass="8309">MPQHSRYSDEHVEQLLSDLLNVLEKHKAPTDLSLMVLGNMVTNLINTSIAPAQRQAIANSFARALQSSINDDKAH</sequence>
<proteinExistence type="inferred from homology"/>
<evidence type="ECO:0000255" key="1">
    <source>
        <dbReference type="HAMAP-Rule" id="MF_00816"/>
    </source>
</evidence>
<name>Y587_CITK8</name>
<reference key="1">
    <citation type="submission" date="2007-08" db="EMBL/GenBank/DDBJ databases">
        <authorList>
            <consortium name="The Citrobacter koseri Genome Sequencing Project"/>
            <person name="McClelland M."/>
            <person name="Sanderson E.K."/>
            <person name="Porwollik S."/>
            <person name="Spieth J."/>
            <person name="Clifton W.S."/>
            <person name="Latreille P."/>
            <person name="Courtney L."/>
            <person name="Wang C."/>
            <person name="Pepin K."/>
            <person name="Bhonagiri V."/>
            <person name="Nash W."/>
            <person name="Johnson M."/>
            <person name="Thiruvilangam P."/>
            <person name="Wilson R."/>
        </authorList>
    </citation>
    <scope>NUCLEOTIDE SEQUENCE [LARGE SCALE GENOMIC DNA]</scope>
    <source>
        <strain>ATCC BAA-895 / CDC 4225-83 / SGSC4696</strain>
    </source>
</reference>
<keyword id="KW-1185">Reference proteome</keyword>